<gene>
    <name type="primary">nifA</name>
</gene>
<accession>P09570</accession>
<comment type="function">
    <text>Required for activation of most nif operons, which are directly involved in nitrogen fixation.</text>
</comment>
<comment type="subunit">
    <text>Interacts with sigma-54.</text>
</comment>
<name>NIFA_AZOVI</name>
<evidence type="ECO:0000250" key="1"/>
<evidence type="ECO:0000255" key="2">
    <source>
        <dbReference type="PROSITE-ProRule" id="PRU00193"/>
    </source>
</evidence>
<proteinExistence type="predicted"/>
<feature type="chain" id="PRO_0000081304" description="Nif-specific regulatory protein">
    <location>
        <begin position="1"/>
        <end position="522"/>
    </location>
</feature>
<feature type="domain" description="GAF">
    <location>
        <begin position="37"/>
        <end position="178"/>
    </location>
</feature>
<feature type="domain" description="Sigma-54 factor interaction" evidence="2">
    <location>
        <begin position="211"/>
        <end position="439"/>
    </location>
</feature>
<feature type="DNA-binding region" description="H-T-H motif" evidence="1">
    <location>
        <begin position="494"/>
        <end position="513"/>
    </location>
</feature>
<feature type="region of interest" description="A domain">
    <location>
        <begin position="1"/>
        <end position="184"/>
    </location>
</feature>
<feature type="region of interest" description="Inter-domain linker">
    <location>
        <begin position="440"/>
        <end position="479"/>
    </location>
</feature>
<feature type="region of interest" description="C-terminal DNA-binding domain">
    <location>
        <begin position="480"/>
        <end position="522"/>
    </location>
</feature>
<feature type="binding site" evidence="2">
    <location>
        <begin position="239"/>
        <end position="246"/>
    </location>
    <ligand>
        <name>ATP</name>
        <dbReference type="ChEBI" id="CHEBI:30616"/>
    </ligand>
</feature>
<feature type="binding site" evidence="2">
    <location>
        <begin position="302"/>
        <end position="311"/>
    </location>
    <ligand>
        <name>ATP</name>
        <dbReference type="ChEBI" id="CHEBI:30616"/>
    </ligand>
</feature>
<dbReference type="EMBL" id="Y00554">
    <property type="protein sequence ID" value="CAA68633.1"/>
    <property type="molecule type" value="Genomic_DNA"/>
</dbReference>
<dbReference type="EMBL" id="J03411">
    <property type="protein sequence ID" value="AAA22147.1"/>
    <property type="molecule type" value="Genomic_DNA"/>
</dbReference>
<dbReference type="PIR" id="S01927">
    <property type="entry name" value="S01927"/>
</dbReference>
<dbReference type="SMR" id="P09570"/>
<dbReference type="IntAct" id="P09570">
    <property type="interactions" value="1"/>
</dbReference>
<dbReference type="GO" id="GO:0005524">
    <property type="term" value="F:ATP binding"/>
    <property type="evidence" value="ECO:0007669"/>
    <property type="project" value="UniProtKB-KW"/>
</dbReference>
<dbReference type="GO" id="GO:0016887">
    <property type="term" value="F:ATP hydrolysis activity"/>
    <property type="evidence" value="ECO:0007669"/>
    <property type="project" value="InterPro"/>
</dbReference>
<dbReference type="GO" id="GO:0003700">
    <property type="term" value="F:DNA-binding transcription factor activity"/>
    <property type="evidence" value="ECO:0007669"/>
    <property type="project" value="InterPro"/>
</dbReference>
<dbReference type="GO" id="GO:0043565">
    <property type="term" value="F:sequence-specific DNA binding"/>
    <property type="evidence" value="ECO:0007669"/>
    <property type="project" value="InterPro"/>
</dbReference>
<dbReference type="GO" id="GO:0009399">
    <property type="term" value="P:nitrogen fixation"/>
    <property type="evidence" value="ECO:0007669"/>
    <property type="project" value="UniProtKB-KW"/>
</dbReference>
<dbReference type="GO" id="GO:0000160">
    <property type="term" value="P:phosphorelay signal transduction system"/>
    <property type="evidence" value="ECO:0007669"/>
    <property type="project" value="UniProtKB-KW"/>
</dbReference>
<dbReference type="CDD" id="cd00009">
    <property type="entry name" value="AAA"/>
    <property type="match status" value="1"/>
</dbReference>
<dbReference type="FunFam" id="3.40.50.300:FF:000006">
    <property type="entry name" value="DNA-binding transcriptional regulator NtrC"/>
    <property type="match status" value="1"/>
</dbReference>
<dbReference type="Gene3D" id="1.10.8.60">
    <property type="match status" value="1"/>
</dbReference>
<dbReference type="Gene3D" id="3.30.450.40">
    <property type="match status" value="1"/>
</dbReference>
<dbReference type="Gene3D" id="1.10.10.60">
    <property type="entry name" value="Homeodomain-like"/>
    <property type="match status" value="1"/>
</dbReference>
<dbReference type="Gene3D" id="3.40.50.300">
    <property type="entry name" value="P-loop containing nucleotide triphosphate hydrolases"/>
    <property type="match status" value="1"/>
</dbReference>
<dbReference type="InterPro" id="IPR003593">
    <property type="entry name" value="AAA+_ATPase"/>
</dbReference>
<dbReference type="InterPro" id="IPR003018">
    <property type="entry name" value="GAF"/>
</dbReference>
<dbReference type="InterPro" id="IPR029016">
    <property type="entry name" value="GAF-like_dom_sf"/>
</dbReference>
<dbReference type="InterPro" id="IPR009057">
    <property type="entry name" value="Homeodomain-like_sf"/>
</dbReference>
<dbReference type="InterPro" id="IPR002197">
    <property type="entry name" value="HTH_Fis"/>
</dbReference>
<dbReference type="InterPro" id="IPR010113">
    <property type="entry name" value="Nif-specific_regulatory_prot"/>
</dbReference>
<dbReference type="InterPro" id="IPR027417">
    <property type="entry name" value="P-loop_NTPase"/>
</dbReference>
<dbReference type="InterPro" id="IPR002078">
    <property type="entry name" value="Sigma_54_int"/>
</dbReference>
<dbReference type="InterPro" id="IPR025662">
    <property type="entry name" value="Sigma_54_int_dom_ATP-bd_1"/>
</dbReference>
<dbReference type="InterPro" id="IPR025943">
    <property type="entry name" value="Sigma_54_int_dom_ATP-bd_2"/>
</dbReference>
<dbReference type="InterPro" id="IPR025944">
    <property type="entry name" value="Sigma_54_int_dom_CS"/>
</dbReference>
<dbReference type="NCBIfam" id="TIGR01817">
    <property type="entry name" value="nifA"/>
    <property type="match status" value="1"/>
</dbReference>
<dbReference type="PANTHER" id="PTHR32071:SF117">
    <property type="entry name" value="PTS-DEPENDENT DIHYDROXYACETONE KINASE OPERON REGULATORY PROTEIN-RELATED"/>
    <property type="match status" value="1"/>
</dbReference>
<dbReference type="PANTHER" id="PTHR32071">
    <property type="entry name" value="TRANSCRIPTIONAL REGULATORY PROTEIN"/>
    <property type="match status" value="1"/>
</dbReference>
<dbReference type="Pfam" id="PF13185">
    <property type="entry name" value="GAF_2"/>
    <property type="match status" value="1"/>
</dbReference>
<dbReference type="Pfam" id="PF02954">
    <property type="entry name" value="HTH_8"/>
    <property type="match status" value="1"/>
</dbReference>
<dbReference type="Pfam" id="PF00158">
    <property type="entry name" value="Sigma54_activat"/>
    <property type="match status" value="1"/>
</dbReference>
<dbReference type="PRINTS" id="PR01590">
    <property type="entry name" value="HTHFIS"/>
</dbReference>
<dbReference type="SMART" id="SM00382">
    <property type="entry name" value="AAA"/>
    <property type="match status" value="1"/>
</dbReference>
<dbReference type="SMART" id="SM00065">
    <property type="entry name" value="GAF"/>
    <property type="match status" value="1"/>
</dbReference>
<dbReference type="SUPFAM" id="SSF55781">
    <property type="entry name" value="GAF domain-like"/>
    <property type="match status" value="1"/>
</dbReference>
<dbReference type="SUPFAM" id="SSF46689">
    <property type="entry name" value="Homeodomain-like"/>
    <property type="match status" value="1"/>
</dbReference>
<dbReference type="SUPFAM" id="SSF52540">
    <property type="entry name" value="P-loop containing nucleoside triphosphate hydrolases"/>
    <property type="match status" value="1"/>
</dbReference>
<dbReference type="PROSITE" id="PS00675">
    <property type="entry name" value="SIGMA54_INTERACT_1"/>
    <property type="match status" value="1"/>
</dbReference>
<dbReference type="PROSITE" id="PS00676">
    <property type="entry name" value="SIGMA54_INTERACT_2"/>
    <property type="match status" value="1"/>
</dbReference>
<dbReference type="PROSITE" id="PS00688">
    <property type="entry name" value="SIGMA54_INTERACT_3"/>
    <property type="match status" value="1"/>
</dbReference>
<dbReference type="PROSITE" id="PS50045">
    <property type="entry name" value="SIGMA54_INTERACT_4"/>
    <property type="match status" value="1"/>
</dbReference>
<protein>
    <recommendedName>
        <fullName>Nif-specific regulatory protein</fullName>
    </recommendedName>
</protein>
<reference key="1">
    <citation type="journal article" date="1988" name="Mol. Microbiol.">
        <title>Nucleotide sequence and mutagenesis of the nifA gene from Azotobacter vinelandii.</title>
        <authorList>
            <person name="Bennet L.T."/>
            <person name="Cannon F."/>
            <person name="Dean D.R."/>
        </authorList>
    </citation>
    <scope>NUCLEOTIDE SEQUENCE [GENOMIC DNA]</scope>
    <source>
        <strain>ATCC 13705 / OP1 / DSM 366 / NCIMB 11614 / LMG 3878 / UW</strain>
    </source>
</reference>
<reference key="2">
    <citation type="journal article" date="1988" name="J. Bacteriol.">
        <title>Nucleotide sequence and genetic analysis of the nifB-nifQ region from Azotobacter vinelandii.</title>
        <authorList>
            <person name="Joerger R.D."/>
            <person name="Bishop P.E."/>
        </authorList>
    </citation>
    <scope>NUCLEOTIDE SEQUENCE [GENOMIC DNA] OF 394-522</scope>
</reference>
<keyword id="KW-0010">Activator</keyword>
<keyword id="KW-0067">ATP-binding</keyword>
<keyword id="KW-0238">DNA-binding</keyword>
<keyword id="KW-0535">Nitrogen fixation</keyword>
<keyword id="KW-0547">Nucleotide-binding</keyword>
<keyword id="KW-0804">Transcription</keyword>
<keyword id="KW-0805">Transcription regulation</keyword>
<keyword id="KW-0902">Two-component regulatory system</keyword>
<sequence>MNATIPQRSAKQNPVELYDLQLQALASIARTLSREQQIDELLEQVLAVLHNDLGLLHGLVTISDPEHGALQIGAIHTDSEAVAQACEGVRYRSGEGVIGNVLKHGNSVVLGRISADPRFLDRLALYDLEMPFIAVPIKNPEGNTIGVLAAQPDCRADEHMPARTRFLEIVANLLAQTVRLVVNIEDGREAADERDELRREVRGKYGFENMVVGHTPTMRRVFDQIRRVAKWNSTVLVLGESGTGKELIASAIHYKSPRAHRPFVRLNCAALPETLLESELFGHEKGAFTGAVKQRKGRFEQADGGTLFLDEIGEISPMFQAKLLRVLQEGEFERVGGNQTVRVNVRIVAATNRDLESEVEKGKFREDLYYRLNVMAIRIPPLRERTADIPELAEFLLGKIGRQQGRPLTVTDSAIRLLMSHRWPGNVRELENCLERSAIMSEDGTITRDVVSLTGVDNESPPLAAPLPEVNLADETLDDRERVIAALEQAGWVQAKAARLLGMTPRQIAYRIQTLNIHMRKI</sequence>
<organism>
    <name type="scientific">Azotobacter vinelandii</name>
    <dbReference type="NCBI Taxonomy" id="354"/>
    <lineage>
        <taxon>Bacteria</taxon>
        <taxon>Pseudomonadati</taxon>
        <taxon>Pseudomonadota</taxon>
        <taxon>Gammaproteobacteria</taxon>
        <taxon>Pseudomonadales</taxon>
        <taxon>Pseudomonadaceae</taxon>
        <taxon>Azotobacter</taxon>
    </lineage>
</organism>